<accession>B2I4Q1</accession>
<gene>
    <name evidence="1" type="primary">rsmG</name>
    <name type="ordered locus">XfasM23_0911</name>
</gene>
<dbReference type="EC" id="2.1.1.170" evidence="1"/>
<dbReference type="EMBL" id="CP001011">
    <property type="protein sequence ID" value="ACB92346.1"/>
    <property type="molecule type" value="Genomic_DNA"/>
</dbReference>
<dbReference type="RefSeq" id="WP_004572865.1">
    <property type="nucleotide sequence ID" value="NC_010577.1"/>
</dbReference>
<dbReference type="SMR" id="B2I4Q1"/>
<dbReference type="GeneID" id="93904648"/>
<dbReference type="KEGG" id="xfn:XfasM23_0911"/>
<dbReference type="HOGENOM" id="CLU_065341_2_0_6"/>
<dbReference type="Proteomes" id="UP000001698">
    <property type="component" value="Chromosome"/>
</dbReference>
<dbReference type="GO" id="GO:0005829">
    <property type="term" value="C:cytosol"/>
    <property type="evidence" value="ECO:0007669"/>
    <property type="project" value="TreeGrafter"/>
</dbReference>
<dbReference type="GO" id="GO:0070043">
    <property type="term" value="F:rRNA (guanine-N7-)-methyltransferase activity"/>
    <property type="evidence" value="ECO:0007669"/>
    <property type="project" value="UniProtKB-UniRule"/>
</dbReference>
<dbReference type="Gene3D" id="3.40.50.150">
    <property type="entry name" value="Vaccinia Virus protein VP39"/>
    <property type="match status" value="1"/>
</dbReference>
<dbReference type="HAMAP" id="MF_00074">
    <property type="entry name" value="16SrRNA_methyltr_G"/>
    <property type="match status" value="1"/>
</dbReference>
<dbReference type="InterPro" id="IPR003682">
    <property type="entry name" value="rRNA_ssu_MeTfrase_G"/>
</dbReference>
<dbReference type="InterPro" id="IPR029063">
    <property type="entry name" value="SAM-dependent_MTases_sf"/>
</dbReference>
<dbReference type="NCBIfam" id="TIGR00138">
    <property type="entry name" value="rsmG_gidB"/>
    <property type="match status" value="1"/>
</dbReference>
<dbReference type="PANTHER" id="PTHR31760">
    <property type="entry name" value="S-ADENOSYL-L-METHIONINE-DEPENDENT METHYLTRANSFERASES SUPERFAMILY PROTEIN"/>
    <property type="match status" value="1"/>
</dbReference>
<dbReference type="PANTHER" id="PTHR31760:SF0">
    <property type="entry name" value="S-ADENOSYL-L-METHIONINE-DEPENDENT METHYLTRANSFERASES SUPERFAMILY PROTEIN"/>
    <property type="match status" value="1"/>
</dbReference>
<dbReference type="Pfam" id="PF02527">
    <property type="entry name" value="GidB"/>
    <property type="match status" value="1"/>
</dbReference>
<dbReference type="PIRSF" id="PIRSF003078">
    <property type="entry name" value="GidB"/>
    <property type="match status" value="1"/>
</dbReference>
<dbReference type="SUPFAM" id="SSF53335">
    <property type="entry name" value="S-adenosyl-L-methionine-dependent methyltransferases"/>
    <property type="match status" value="1"/>
</dbReference>
<evidence type="ECO:0000255" key="1">
    <source>
        <dbReference type="HAMAP-Rule" id="MF_00074"/>
    </source>
</evidence>
<organism>
    <name type="scientific">Xylella fastidiosa (strain M23)</name>
    <dbReference type="NCBI Taxonomy" id="405441"/>
    <lineage>
        <taxon>Bacteria</taxon>
        <taxon>Pseudomonadati</taxon>
        <taxon>Pseudomonadota</taxon>
        <taxon>Gammaproteobacteria</taxon>
        <taxon>Lysobacterales</taxon>
        <taxon>Lysobacteraceae</taxon>
        <taxon>Xylella</taxon>
    </lineage>
</organism>
<keyword id="KW-0963">Cytoplasm</keyword>
<keyword id="KW-0489">Methyltransferase</keyword>
<keyword id="KW-0698">rRNA processing</keyword>
<keyword id="KW-0949">S-adenosyl-L-methionine</keyword>
<keyword id="KW-0808">Transferase</keyword>
<proteinExistence type="inferred from homology"/>
<feature type="chain" id="PRO_1000092661" description="Ribosomal RNA small subunit methyltransferase G">
    <location>
        <begin position="1"/>
        <end position="212"/>
    </location>
</feature>
<feature type="binding site" evidence="1">
    <location>
        <position position="80"/>
    </location>
    <ligand>
        <name>S-adenosyl-L-methionine</name>
        <dbReference type="ChEBI" id="CHEBI:59789"/>
    </ligand>
</feature>
<feature type="binding site" evidence="1">
    <location>
        <position position="85"/>
    </location>
    <ligand>
        <name>S-adenosyl-L-methionine</name>
        <dbReference type="ChEBI" id="CHEBI:59789"/>
    </ligand>
</feature>
<feature type="binding site" evidence="1">
    <location>
        <begin position="131"/>
        <end position="132"/>
    </location>
    <ligand>
        <name>S-adenosyl-L-methionine</name>
        <dbReference type="ChEBI" id="CHEBI:59789"/>
    </ligand>
</feature>
<feature type="binding site" evidence="1">
    <location>
        <position position="146"/>
    </location>
    <ligand>
        <name>S-adenosyl-L-methionine</name>
        <dbReference type="ChEBI" id="CHEBI:59789"/>
    </ligand>
</feature>
<comment type="function">
    <text evidence="1">Specifically methylates the N7 position of guanine in position 527 of 16S rRNA.</text>
</comment>
<comment type="catalytic activity">
    <reaction evidence="1">
        <text>guanosine(527) in 16S rRNA + S-adenosyl-L-methionine = N(7)-methylguanosine(527) in 16S rRNA + S-adenosyl-L-homocysteine</text>
        <dbReference type="Rhea" id="RHEA:42732"/>
        <dbReference type="Rhea" id="RHEA-COMP:10209"/>
        <dbReference type="Rhea" id="RHEA-COMP:10210"/>
        <dbReference type="ChEBI" id="CHEBI:57856"/>
        <dbReference type="ChEBI" id="CHEBI:59789"/>
        <dbReference type="ChEBI" id="CHEBI:74269"/>
        <dbReference type="ChEBI" id="CHEBI:74480"/>
        <dbReference type="EC" id="2.1.1.170"/>
    </reaction>
</comment>
<comment type="subcellular location">
    <subcellularLocation>
        <location evidence="1">Cytoplasm</location>
    </subcellularLocation>
</comment>
<comment type="similarity">
    <text evidence="1">Belongs to the methyltransferase superfamily. RNA methyltransferase RsmG family.</text>
</comment>
<sequence length="212" mass="23468">MNDSSLSPEVTADLEYGLDILELDRAYVVPLLAYLTLLIRWNRTYNLTAIRDPREMVVRHLLDSLAIQRYVTVGRLADLGSGPGLPGIPLAISCPSLQVTLVESNGKKARFLREVVRQLGLSNVGVSEVRAEALDEALMYEHLTARALDTLNGIVTVGGHLLKSEGTLLAMKGAYPHEEIAMLPPHWVVEAVHRLQVPKLTGERHLVIVRKR</sequence>
<name>RSMG_XYLF2</name>
<reference key="1">
    <citation type="journal article" date="2010" name="J. Bacteriol.">
        <title>Whole genome sequences of two Xylella fastidiosa strains (M12 and M23) causing almond leaf scorch disease in California.</title>
        <authorList>
            <person name="Chen J."/>
            <person name="Xie G."/>
            <person name="Han S."/>
            <person name="Chertkov O."/>
            <person name="Sims D."/>
            <person name="Civerolo E.L."/>
        </authorList>
    </citation>
    <scope>NUCLEOTIDE SEQUENCE [LARGE SCALE GENOMIC DNA]</scope>
    <source>
        <strain>M23</strain>
    </source>
</reference>
<protein>
    <recommendedName>
        <fullName evidence="1">Ribosomal RNA small subunit methyltransferase G</fullName>
        <ecNumber evidence="1">2.1.1.170</ecNumber>
    </recommendedName>
    <alternativeName>
        <fullName evidence="1">16S rRNA 7-methylguanosine methyltransferase</fullName>
        <shortName evidence="1">16S rRNA m7G methyltransferase</shortName>
    </alternativeName>
</protein>